<proteinExistence type="inferred from homology"/>
<evidence type="ECO:0000255" key="1">
    <source>
        <dbReference type="HAMAP-Rule" id="MF_00764"/>
    </source>
</evidence>
<comment type="similarity">
    <text evidence="1">Belongs to the UPF0306 family.</text>
</comment>
<reference key="1">
    <citation type="journal article" date="2006" name="Mol. Microbiol.">
        <title>Role of pathogenicity island-associated integrases in the genome plasticity of uropathogenic Escherichia coli strain 536.</title>
        <authorList>
            <person name="Hochhut B."/>
            <person name="Wilde C."/>
            <person name="Balling G."/>
            <person name="Middendorf B."/>
            <person name="Dobrindt U."/>
            <person name="Brzuszkiewicz E."/>
            <person name="Gottschalk G."/>
            <person name="Carniel E."/>
            <person name="Hacker J."/>
        </authorList>
    </citation>
    <scope>NUCLEOTIDE SEQUENCE [LARGE SCALE GENOMIC DNA]</scope>
    <source>
        <strain>536 / UPEC</strain>
    </source>
</reference>
<gene>
    <name evidence="1" type="primary">yhbP</name>
    <name type="ordered locus">ECP_3242</name>
</gene>
<dbReference type="EMBL" id="CP000247">
    <property type="protein sequence ID" value="ABG71224.1"/>
    <property type="molecule type" value="Genomic_DNA"/>
</dbReference>
<dbReference type="RefSeq" id="WP_000449457.1">
    <property type="nucleotide sequence ID" value="NC_008253.1"/>
</dbReference>
<dbReference type="SMR" id="Q0TCV5"/>
<dbReference type="KEGG" id="ecp:ECP_3242"/>
<dbReference type="HOGENOM" id="CLU_105087_3_0_6"/>
<dbReference type="Proteomes" id="UP000009182">
    <property type="component" value="Chromosome"/>
</dbReference>
<dbReference type="FunFam" id="2.30.110.10:FF:000003">
    <property type="entry name" value="UPF0306 protein YhbP"/>
    <property type="match status" value="1"/>
</dbReference>
<dbReference type="Gene3D" id="2.30.110.10">
    <property type="entry name" value="Electron Transport, Fmn-binding Protein, Chain A"/>
    <property type="match status" value="1"/>
</dbReference>
<dbReference type="HAMAP" id="MF_00764">
    <property type="entry name" value="UPF0306"/>
    <property type="match status" value="1"/>
</dbReference>
<dbReference type="InterPro" id="IPR012349">
    <property type="entry name" value="Split_barrel_FMN-bd"/>
</dbReference>
<dbReference type="InterPro" id="IPR011194">
    <property type="entry name" value="UPF0306"/>
</dbReference>
<dbReference type="NCBIfam" id="NF002900">
    <property type="entry name" value="PRK03467.1"/>
    <property type="match status" value="1"/>
</dbReference>
<dbReference type="PIRSF" id="PIRSF009554">
    <property type="entry name" value="UCP009554"/>
    <property type="match status" value="1"/>
</dbReference>
<dbReference type="SUPFAM" id="SSF50475">
    <property type="entry name" value="FMN-binding split barrel"/>
    <property type="match status" value="1"/>
</dbReference>
<sequence length="147" mass="16763">METLTAISRWLAKQHVVTWCVQQEGELWCANAFYLFDAQKVAFYILTEEKTRHAQMSGPQAAVAGTVNGQPKTVALIRGVQFKGEIRRLEGEESDLARQAYNRRFPVARMLSAPVWEIRLDEIKFTDNTLGFGKKMIWLRNSGTEQA</sequence>
<name>YHBP_ECOL5</name>
<protein>
    <recommendedName>
        <fullName evidence="1">UPF0306 protein YhbP</fullName>
    </recommendedName>
</protein>
<accession>Q0TCV5</accession>
<organism>
    <name type="scientific">Escherichia coli O6:K15:H31 (strain 536 / UPEC)</name>
    <dbReference type="NCBI Taxonomy" id="362663"/>
    <lineage>
        <taxon>Bacteria</taxon>
        <taxon>Pseudomonadati</taxon>
        <taxon>Pseudomonadota</taxon>
        <taxon>Gammaproteobacteria</taxon>
        <taxon>Enterobacterales</taxon>
        <taxon>Enterobacteriaceae</taxon>
        <taxon>Escherichia</taxon>
    </lineage>
</organism>
<feature type="chain" id="PRO_1000046777" description="UPF0306 protein YhbP">
    <location>
        <begin position="1"/>
        <end position="147"/>
    </location>
</feature>